<protein>
    <recommendedName>
        <fullName evidence="1">Orotate phosphoribosyltransferase</fullName>
        <shortName evidence="1">OPRT</shortName>
        <shortName evidence="1">OPRTase</shortName>
        <ecNumber evidence="1">2.4.2.10</ecNumber>
    </recommendedName>
</protein>
<accession>B4S200</accession>
<accession>F2G490</accession>
<proteinExistence type="inferred from homology"/>
<keyword id="KW-0328">Glycosyltransferase</keyword>
<keyword id="KW-0460">Magnesium</keyword>
<keyword id="KW-0665">Pyrimidine biosynthesis</keyword>
<keyword id="KW-0808">Transferase</keyword>
<gene>
    <name evidence="1" type="primary">pyrE</name>
    <name type="ordered locus">MADE_1020275</name>
</gene>
<comment type="function">
    <text evidence="1">Catalyzes the transfer of a ribosyl phosphate group from 5-phosphoribose 1-diphosphate to orotate, leading to the formation of orotidine monophosphate (OMP).</text>
</comment>
<comment type="catalytic activity">
    <reaction evidence="1">
        <text>orotidine 5'-phosphate + diphosphate = orotate + 5-phospho-alpha-D-ribose 1-diphosphate</text>
        <dbReference type="Rhea" id="RHEA:10380"/>
        <dbReference type="ChEBI" id="CHEBI:30839"/>
        <dbReference type="ChEBI" id="CHEBI:33019"/>
        <dbReference type="ChEBI" id="CHEBI:57538"/>
        <dbReference type="ChEBI" id="CHEBI:58017"/>
        <dbReference type="EC" id="2.4.2.10"/>
    </reaction>
</comment>
<comment type="cofactor">
    <cofactor evidence="1">
        <name>Mg(2+)</name>
        <dbReference type="ChEBI" id="CHEBI:18420"/>
    </cofactor>
</comment>
<comment type="pathway">
    <text evidence="1">Pyrimidine metabolism; UMP biosynthesis via de novo pathway; UMP from orotate: step 1/2.</text>
</comment>
<comment type="subunit">
    <text evidence="1">Homodimer.</text>
</comment>
<comment type="similarity">
    <text evidence="1">Belongs to the purine/pyrimidine phosphoribosyltransferase family. PyrE subfamily.</text>
</comment>
<sequence length="213" mass="23213">MKAFQRDFIEFAIERGVLKFGEFTLKSGRVSPYFFNAGLFNRGGDLAKLGRFYANALMDAGVEFNVLFGPAYKGIPIATTTAVALADNHNLDVPYCFNRKEAKTHGEGGNLVGSPLEGKVMLVDDVITAGTAIRESMTLIEQQQASLSGVLIALDRQERGKGELSAIQEVERDFNTQVISIVSLADVVSYLGEKGGFDNEIAAINTYRENYGI</sequence>
<reference key="1">
    <citation type="journal article" date="2008" name="ISME J.">
        <title>Comparative genomics of two ecotypes of the marine planktonic copiotroph Alteromonas macleodii suggests alternative lifestyles associated with different kinds of particulate organic matter.</title>
        <authorList>
            <person name="Ivars-Martinez E."/>
            <person name="Martin-Cuadrado A.-B."/>
            <person name="D'Auria G."/>
            <person name="Mira A."/>
            <person name="Ferriera S."/>
            <person name="Johnson J."/>
            <person name="Friedman R."/>
            <person name="Rodriguez-Valera F."/>
        </authorList>
    </citation>
    <scope>NUCLEOTIDE SEQUENCE [LARGE SCALE GENOMIC DNA]</scope>
    <source>
        <strain>DSM 17117 / CIP 110805 / LMG 28347 / Deep ecotype</strain>
    </source>
</reference>
<feature type="chain" id="PRO_1000138759" description="Orotate phosphoribosyltransferase">
    <location>
        <begin position="1"/>
        <end position="213"/>
    </location>
</feature>
<feature type="binding site" description="in other chain" evidence="1">
    <location>
        <position position="26"/>
    </location>
    <ligand>
        <name>5-phospho-alpha-D-ribose 1-diphosphate</name>
        <dbReference type="ChEBI" id="CHEBI:58017"/>
        <note>ligand shared between dimeric partners</note>
    </ligand>
</feature>
<feature type="binding site" evidence="1">
    <location>
        <begin position="34"/>
        <end position="35"/>
    </location>
    <ligand>
        <name>orotate</name>
        <dbReference type="ChEBI" id="CHEBI:30839"/>
    </ligand>
</feature>
<feature type="binding site" description="in other chain" evidence="1">
    <location>
        <begin position="72"/>
        <end position="73"/>
    </location>
    <ligand>
        <name>5-phospho-alpha-D-ribose 1-diphosphate</name>
        <dbReference type="ChEBI" id="CHEBI:58017"/>
        <note>ligand shared between dimeric partners</note>
    </ligand>
</feature>
<feature type="binding site" evidence="1">
    <location>
        <position position="99"/>
    </location>
    <ligand>
        <name>5-phospho-alpha-D-ribose 1-diphosphate</name>
        <dbReference type="ChEBI" id="CHEBI:58017"/>
        <note>ligand shared between dimeric partners</note>
    </ligand>
</feature>
<feature type="binding site" description="in other chain" evidence="1">
    <location>
        <position position="100"/>
    </location>
    <ligand>
        <name>5-phospho-alpha-D-ribose 1-diphosphate</name>
        <dbReference type="ChEBI" id="CHEBI:58017"/>
        <note>ligand shared between dimeric partners</note>
    </ligand>
</feature>
<feature type="binding site" evidence="1">
    <location>
        <position position="103"/>
    </location>
    <ligand>
        <name>5-phospho-alpha-D-ribose 1-diphosphate</name>
        <dbReference type="ChEBI" id="CHEBI:58017"/>
        <note>ligand shared between dimeric partners</note>
    </ligand>
</feature>
<feature type="binding site" evidence="1">
    <location>
        <position position="105"/>
    </location>
    <ligand>
        <name>5-phospho-alpha-D-ribose 1-diphosphate</name>
        <dbReference type="ChEBI" id="CHEBI:58017"/>
        <note>ligand shared between dimeric partners</note>
    </ligand>
</feature>
<feature type="binding site" description="in other chain" evidence="1">
    <location>
        <begin position="124"/>
        <end position="132"/>
    </location>
    <ligand>
        <name>5-phospho-alpha-D-ribose 1-diphosphate</name>
        <dbReference type="ChEBI" id="CHEBI:58017"/>
        <note>ligand shared between dimeric partners</note>
    </ligand>
</feature>
<feature type="binding site" evidence="1">
    <location>
        <position position="128"/>
    </location>
    <ligand>
        <name>orotate</name>
        <dbReference type="ChEBI" id="CHEBI:30839"/>
    </ligand>
</feature>
<feature type="binding site" evidence="1">
    <location>
        <position position="156"/>
    </location>
    <ligand>
        <name>orotate</name>
        <dbReference type="ChEBI" id="CHEBI:30839"/>
    </ligand>
</feature>
<organism>
    <name type="scientific">Alteromonas mediterranea (strain DSM 17117 / CIP 110805 / LMG 28347 / Deep ecotype)</name>
    <dbReference type="NCBI Taxonomy" id="1774373"/>
    <lineage>
        <taxon>Bacteria</taxon>
        <taxon>Pseudomonadati</taxon>
        <taxon>Pseudomonadota</taxon>
        <taxon>Gammaproteobacteria</taxon>
        <taxon>Alteromonadales</taxon>
        <taxon>Alteromonadaceae</taxon>
        <taxon>Alteromonas/Salinimonas group</taxon>
        <taxon>Alteromonas</taxon>
    </lineage>
</organism>
<evidence type="ECO:0000255" key="1">
    <source>
        <dbReference type="HAMAP-Rule" id="MF_01208"/>
    </source>
</evidence>
<dbReference type="EC" id="2.4.2.10" evidence="1"/>
<dbReference type="EMBL" id="CP001103">
    <property type="protein sequence ID" value="AEB00178.1"/>
    <property type="molecule type" value="Genomic_DNA"/>
</dbReference>
<dbReference type="RefSeq" id="WP_012518697.1">
    <property type="nucleotide sequence ID" value="NC_011138.3"/>
</dbReference>
<dbReference type="SMR" id="B4S200"/>
<dbReference type="KEGG" id="amc:MADE_1020275"/>
<dbReference type="HOGENOM" id="CLU_074878_0_1_6"/>
<dbReference type="UniPathway" id="UPA00070">
    <property type="reaction ID" value="UER00119"/>
</dbReference>
<dbReference type="Proteomes" id="UP000001870">
    <property type="component" value="Chromosome"/>
</dbReference>
<dbReference type="GO" id="GO:0005737">
    <property type="term" value="C:cytoplasm"/>
    <property type="evidence" value="ECO:0007669"/>
    <property type="project" value="TreeGrafter"/>
</dbReference>
<dbReference type="GO" id="GO:0000287">
    <property type="term" value="F:magnesium ion binding"/>
    <property type="evidence" value="ECO:0007669"/>
    <property type="project" value="UniProtKB-UniRule"/>
</dbReference>
<dbReference type="GO" id="GO:0004588">
    <property type="term" value="F:orotate phosphoribosyltransferase activity"/>
    <property type="evidence" value="ECO:0007669"/>
    <property type="project" value="UniProtKB-UniRule"/>
</dbReference>
<dbReference type="GO" id="GO:0006207">
    <property type="term" value="P:'de novo' pyrimidine nucleobase biosynthetic process"/>
    <property type="evidence" value="ECO:0007669"/>
    <property type="project" value="TreeGrafter"/>
</dbReference>
<dbReference type="GO" id="GO:0044205">
    <property type="term" value="P:'de novo' UMP biosynthetic process"/>
    <property type="evidence" value="ECO:0007669"/>
    <property type="project" value="UniProtKB-UniRule"/>
</dbReference>
<dbReference type="GO" id="GO:0046132">
    <property type="term" value="P:pyrimidine ribonucleoside biosynthetic process"/>
    <property type="evidence" value="ECO:0007669"/>
    <property type="project" value="TreeGrafter"/>
</dbReference>
<dbReference type="CDD" id="cd06223">
    <property type="entry name" value="PRTases_typeI"/>
    <property type="match status" value="1"/>
</dbReference>
<dbReference type="FunFam" id="3.40.50.2020:FF:000008">
    <property type="entry name" value="Orotate phosphoribosyltransferase"/>
    <property type="match status" value="1"/>
</dbReference>
<dbReference type="Gene3D" id="3.40.50.2020">
    <property type="match status" value="1"/>
</dbReference>
<dbReference type="HAMAP" id="MF_01208">
    <property type="entry name" value="PyrE"/>
    <property type="match status" value="1"/>
</dbReference>
<dbReference type="InterPro" id="IPR023031">
    <property type="entry name" value="OPRT"/>
</dbReference>
<dbReference type="InterPro" id="IPR004467">
    <property type="entry name" value="Or_phspho_trans_dom"/>
</dbReference>
<dbReference type="InterPro" id="IPR000836">
    <property type="entry name" value="PRibTrfase_dom"/>
</dbReference>
<dbReference type="InterPro" id="IPR029057">
    <property type="entry name" value="PRTase-like"/>
</dbReference>
<dbReference type="NCBIfam" id="TIGR00336">
    <property type="entry name" value="pyrE"/>
    <property type="match status" value="1"/>
</dbReference>
<dbReference type="PANTHER" id="PTHR46683">
    <property type="entry name" value="OROTATE PHOSPHORIBOSYLTRANSFERASE 1-RELATED"/>
    <property type="match status" value="1"/>
</dbReference>
<dbReference type="PANTHER" id="PTHR46683:SF1">
    <property type="entry name" value="OROTATE PHOSPHORIBOSYLTRANSFERASE 1-RELATED"/>
    <property type="match status" value="1"/>
</dbReference>
<dbReference type="Pfam" id="PF00156">
    <property type="entry name" value="Pribosyltran"/>
    <property type="match status" value="1"/>
</dbReference>
<dbReference type="SUPFAM" id="SSF53271">
    <property type="entry name" value="PRTase-like"/>
    <property type="match status" value="1"/>
</dbReference>
<dbReference type="PROSITE" id="PS00103">
    <property type="entry name" value="PUR_PYR_PR_TRANSFER"/>
    <property type="match status" value="1"/>
</dbReference>
<name>PYRE_ALTMD</name>